<reference key="1">
    <citation type="journal article" date="2004" name="Arch. Microbiol.">
        <title>Characterization and expression of genes from the RubisCO gene cluster of the chemoautotrophic symbiont of Solemya velum: cbbLSQO.</title>
        <authorList>
            <person name="Schwedock J."/>
            <person name="Harmer T.L."/>
            <person name="Scott K.M."/>
            <person name="Hektor H.J."/>
            <person name="Seitz A.P."/>
            <person name="Fontana M.C."/>
            <person name="Distel D.L."/>
            <person name="Cavanaugh C.M."/>
        </authorList>
    </citation>
    <scope>NUCLEOTIDE SEQUENCE [GENOMIC DNA]</scope>
</reference>
<dbReference type="EC" id="4.1.1.39" evidence="1"/>
<dbReference type="EMBL" id="AY531637">
    <property type="protein sequence ID" value="AAT01429.1"/>
    <property type="molecule type" value="Genomic_DNA"/>
</dbReference>
<dbReference type="RefSeq" id="WP_043117722.1">
    <property type="nucleotide sequence ID" value="NZ_JRAA01000002.1"/>
</dbReference>
<dbReference type="SMR" id="Q673V5"/>
<dbReference type="STRING" id="2340.JV46_07630"/>
<dbReference type="GeneID" id="86992628"/>
<dbReference type="eggNOG" id="COG1850">
    <property type="taxonomic scope" value="Bacteria"/>
</dbReference>
<dbReference type="OrthoDB" id="9770811at2"/>
<dbReference type="GO" id="GO:0000287">
    <property type="term" value="F:magnesium ion binding"/>
    <property type="evidence" value="ECO:0007669"/>
    <property type="project" value="UniProtKB-UniRule"/>
</dbReference>
<dbReference type="GO" id="GO:0004497">
    <property type="term" value="F:monooxygenase activity"/>
    <property type="evidence" value="ECO:0007669"/>
    <property type="project" value="UniProtKB-KW"/>
</dbReference>
<dbReference type="GO" id="GO:0016984">
    <property type="term" value="F:ribulose-bisphosphate carboxylase activity"/>
    <property type="evidence" value="ECO:0007669"/>
    <property type="project" value="UniProtKB-UniRule"/>
</dbReference>
<dbReference type="GO" id="GO:0019253">
    <property type="term" value="P:reductive pentose-phosphate cycle"/>
    <property type="evidence" value="ECO:0007669"/>
    <property type="project" value="UniProtKB-UniRule"/>
</dbReference>
<dbReference type="Gene3D" id="3.20.20.110">
    <property type="entry name" value="Ribulose bisphosphate carboxylase, large subunit, C-terminal domain"/>
    <property type="match status" value="1"/>
</dbReference>
<dbReference type="Gene3D" id="3.30.70.150">
    <property type="entry name" value="RuBisCO large subunit, N-terminal domain"/>
    <property type="match status" value="1"/>
</dbReference>
<dbReference type="HAMAP" id="MF_01338">
    <property type="entry name" value="RuBisCO_L_type1"/>
    <property type="match status" value="1"/>
</dbReference>
<dbReference type="InterPro" id="IPR033966">
    <property type="entry name" value="RuBisCO"/>
</dbReference>
<dbReference type="InterPro" id="IPR020878">
    <property type="entry name" value="RuBisCo_large_chain_AS"/>
</dbReference>
<dbReference type="InterPro" id="IPR000685">
    <property type="entry name" value="RuBisCO_lsu_C"/>
</dbReference>
<dbReference type="InterPro" id="IPR036376">
    <property type="entry name" value="RuBisCO_lsu_C_sf"/>
</dbReference>
<dbReference type="InterPro" id="IPR017443">
    <property type="entry name" value="RuBisCO_lsu_fd_N"/>
</dbReference>
<dbReference type="InterPro" id="IPR036422">
    <property type="entry name" value="RuBisCO_lsu_N_sf"/>
</dbReference>
<dbReference type="InterPro" id="IPR020888">
    <property type="entry name" value="RuBisCO_lsuI"/>
</dbReference>
<dbReference type="NCBIfam" id="NF003252">
    <property type="entry name" value="PRK04208.1"/>
    <property type="match status" value="1"/>
</dbReference>
<dbReference type="PANTHER" id="PTHR42704">
    <property type="entry name" value="RIBULOSE BISPHOSPHATE CARBOXYLASE"/>
    <property type="match status" value="1"/>
</dbReference>
<dbReference type="PANTHER" id="PTHR42704:SF17">
    <property type="entry name" value="RIBULOSE BISPHOSPHATE CARBOXYLASE LARGE CHAIN"/>
    <property type="match status" value="1"/>
</dbReference>
<dbReference type="Pfam" id="PF00016">
    <property type="entry name" value="RuBisCO_large"/>
    <property type="match status" value="1"/>
</dbReference>
<dbReference type="Pfam" id="PF02788">
    <property type="entry name" value="RuBisCO_large_N"/>
    <property type="match status" value="1"/>
</dbReference>
<dbReference type="SFLD" id="SFLDG01052">
    <property type="entry name" value="RuBisCO"/>
    <property type="match status" value="1"/>
</dbReference>
<dbReference type="SFLD" id="SFLDS00014">
    <property type="entry name" value="RuBisCO"/>
    <property type="match status" value="1"/>
</dbReference>
<dbReference type="SFLD" id="SFLDG00301">
    <property type="entry name" value="RuBisCO-like_proteins"/>
    <property type="match status" value="1"/>
</dbReference>
<dbReference type="SUPFAM" id="SSF51649">
    <property type="entry name" value="RuBisCo, C-terminal domain"/>
    <property type="match status" value="1"/>
</dbReference>
<dbReference type="SUPFAM" id="SSF54966">
    <property type="entry name" value="RuBisCO, large subunit, small (N-terminal) domain"/>
    <property type="match status" value="1"/>
</dbReference>
<dbReference type="PROSITE" id="PS00157">
    <property type="entry name" value="RUBISCO_LARGE"/>
    <property type="match status" value="1"/>
</dbReference>
<evidence type="ECO:0000255" key="1">
    <source>
        <dbReference type="HAMAP-Rule" id="MF_01338"/>
    </source>
</evidence>
<keyword id="KW-0113">Calvin cycle</keyword>
<keyword id="KW-0120">Carbon dioxide fixation</keyword>
<keyword id="KW-0456">Lyase</keyword>
<keyword id="KW-0460">Magnesium</keyword>
<keyword id="KW-0479">Metal-binding</keyword>
<keyword id="KW-0503">Monooxygenase</keyword>
<keyword id="KW-0560">Oxidoreductase</keyword>
<feature type="chain" id="PRO_0000062648" description="Ribulose bisphosphate carboxylase large chain">
    <location>
        <begin position="1"/>
        <end position="472"/>
    </location>
</feature>
<feature type="active site" description="Proton acceptor" evidence="1">
    <location>
        <position position="167"/>
    </location>
</feature>
<feature type="active site" description="Proton acceptor" evidence="1">
    <location>
        <position position="286"/>
    </location>
</feature>
<feature type="binding site" description="in homodimeric partner" evidence="1">
    <location>
        <position position="115"/>
    </location>
    <ligand>
        <name>substrate</name>
    </ligand>
</feature>
<feature type="binding site" evidence="1">
    <location>
        <position position="165"/>
    </location>
    <ligand>
        <name>substrate</name>
    </ligand>
</feature>
<feature type="binding site" evidence="1">
    <location>
        <position position="169"/>
    </location>
    <ligand>
        <name>substrate</name>
    </ligand>
</feature>
<feature type="binding site" description="via carbamate group" evidence="1">
    <location>
        <position position="193"/>
    </location>
    <ligand>
        <name>Mg(2+)</name>
        <dbReference type="ChEBI" id="CHEBI:18420"/>
    </ligand>
</feature>
<feature type="binding site" evidence="1">
    <location>
        <position position="195"/>
    </location>
    <ligand>
        <name>Mg(2+)</name>
        <dbReference type="ChEBI" id="CHEBI:18420"/>
    </ligand>
</feature>
<feature type="binding site" evidence="1">
    <location>
        <position position="196"/>
    </location>
    <ligand>
        <name>Mg(2+)</name>
        <dbReference type="ChEBI" id="CHEBI:18420"/>
    </ligand>
</feature>
<feature type="binding site" evidence="1">
    <location>
        <position position="287"/>
    </location>
    <ligand>
        <name>substrate</name>
    </ligand>
</feature>
<feature type="binding site" evidence="1">
    <location>
        <position position="319"/>
    </location>
    <ligand>
        <name>substrate</name>
    </ligand>
</feature>
<feature type="binding site" evidence="1">
    <location>
        <position position="371"/>
    </location>
    <ligand>
        <name>substrate</name>
    </ligand>
</feature>
<feature type="site" description="Transition state stabilizer" evidence="1">
    <location>
        <position position="326"/>
    </location>
</feature>
<feature type="modified residue" description="N6-carboxylysine" evidence="1">
    <location>
        <position position="193"/>
    </location>
</feature>
<organism>
    <name type="scientific">Solemya velum gill symbiont</name>
    <dbReference type="NCBI Taxonomy" id="2340"/>
    <lineage>
        <taxon>Bacteria</taxon>
        <taxon>Pseudomonadati</taxon>
        <taxon>Pseudomonadota</taxon>
        <taxon>Gammaproteobacteria</taxon>
        <taxon>sulfur-oxidizing symbionts</taxon>
    </lineage>
</organism>
<gene>
    <name evidence="1" type="primary">cbbL</name>
</gene>
<protein>
    <recommendedName>
        <fullName evidence="1">Ribulose bisphosphate carboxylase large chain</fullName>
        <shortName evidence="1">RuBisCO large subunit</shortName>
        <ecNumber evidence="1">4.1.1.39</ecNumber>
    </recommendedName>
</protein>
<comment type="function">
    <text evidence="1">RuBisCO catalyzes two reactions: the carboxylation of D-ribulose 1,5-bisphosphate, the primary event in carbon dioxide fixation, as well as the oxidative fragmentation of the pentose substrate. Both reactions occur simultaneously and in competition at the same active site.</text>
</comment>
<comment type="catalytic activity">
    <reaction evidence="1">
        <text>2 (2R)-3-phosphoglycerate + 2 H(+) = D-ribulose 1,5-bisphosphate + CO2 + H2O</text>
        <dbReference type="Rhea" id="RHEA:23124"/>
        <dbReference type="ChEBI" id="CHEBI:15377"/>
        <dbReference type="ChEBI" id="CHEBI:15378"/>
        <dbReference type="ChEBI" id="CHEBI:16526"/>
        <dbReference type="ChEBI" id="CHEBI:57870"/>
        <dbReference type="ChEBI" id="CHEBI:58272"/>
        <dbReference type="EC" id="4.1.1.39"/>
    </reaction>
</comment>
<comment type="catalytic activity">
    <reaction evidence="1">
        <text>D-ribulose 1,5-bisphosphate + O2 = 2-phosphoglycolate + (2R)-3-phosphoglycerate + 2 H(+)</text>
        <dbReference type="Rhea" id="RHEA:36631"/>
        <dbReference type="ChEBI" id="CHEBI:15378"/>
        <dbReference type="ChEBI" id="CHEBI:15379"/>
        <dbReference type="ChEBI" id="CHEBI:57870"/>
        <dbReference type="ChEBI" id="CHEBI:58033"/>
        <dbReference type="ChEBI" id="CHEBI:58272"/>
    </reaction>
</comment>
<comment type="cofactor">
    <cofactor evidence="1">
        <name>Mg(2+)</name>
        <dbReference type="ChEBI" id="CHEBI:18420"/>
    </cofactor>
    <text evidence="1">Binds 1 Mg(2+) ion per subunit.</text>
</comment>
<comment type="subunit">
    <text evidence="1">Heterohexadecamer of 8 large chains and 8 small chains.</text>
</comment>
<comment type="miscellaneous">
    <text evidence="1">The basic functional RuBisCO is composed of a large chain homodimer in a 'head-to-tail' conformation. In form I RuBisCO this homodimer is arranged in a barrel-like tetramer with the small subunits forming a tetrameric 'cap' on each end of the 'barrel'.</text>
</comment>
<comment type="similarity">
    <text evidence="1">Belongs to the RuBisCO large chain family. Type I subfamily.</text>
</comment>
<proteinExistence type="inferred from homology"/>
<accession>Q673V5</accession>
<name>RBL_SOVGS</name>
<sequence length="472" mass="52586">MAKTYDAGVKEYRETYWMPEYTPLDTDILACFKVTPQPGVPREEVAAAVAAESSTGTWTTVWTDLLTDLDHYKGRAYAIEDVPGDDTCFYAFIAYPIDLFEEGSVVNVMTSLVGNVFGFKALRALRLEDIRFPIAYVMTCNGPPQGIQVERDLLNKYGRPLLGCTIKPKLGLSAKNYGRACYEGLRGGLDFTKDDENVNSQPFMRWRHRFDFVMEAIQKAEAETGERKGHYLNVTAPTSDEMMKRAEYAKEIGAPIIMHDYITGGWSANTQLAQWCQDNGMLLHIHRAMHAVLDRNPHHGIHFRVLTKILRLSGGDHLHSGTVVGKLEGDREATLGWIDIMRDSFNKEDRSRGIFFDQDWGSMPGVLPVASGGIHVWHMPALVNIFGDDSVLQFGGGTLGHPWGNAAGAAANRVAVEACVEARNNGRELEKEGKEILTTAAAHSPELKAAMETWKEIKFEFDTVDKLDVSHK</sequence>